<proteinExistence type="evidence at transcript level"/>
<accession>P19311</accession>
<comment type="function">
    <text evidence="1">RuBisCO catalyzes two reactions: the carboxylation of D-ribulose 1,5-bisphosphate, the primary event in carbon dioxide fixation, as well as the oxidative fragmentation of the pentose substrate. Both reactions occur simultaneously and in competition at the same active site. Although the small subunit is not catalytic it is essential for maximal activity.</text>
</comment>
<comment type="subunit">
    <text evidence="1">Heterohexadecamer of 8 large and 8 small subunits.</text>
</comment>
<comment type="subcellular location">
    <subcellularLocation>
        <location evidence="1">Plastid</location>
        <location evidence="1">Chloroplast</location>
    </subcellularLocation>
</comment>
<comment type="induction">
    <text evidence="2">Accumulates to low levels when grown under continuous white light.</text>
</comment>
<comment type="miscellaneous">
    <text>This protein is coded by one member of a small multigene family.</text>
</comment>
<comment type="miscellaneous">
    <text evidence="1">The basic functional RuBisCO is composed of a large chain homodimer in a 'head-to-tail' conformation. In form I RuBisCO this homodimer is arranged in a barrel-like tetramer with the small subunits forming a tetrameric 'cap' on each end of the 'barrel'.</text>
</comment>
<comment type="similarity">
    <text evidence="1">Belongs to the RuBisCO small chain family.</text>
</comment>
<name>RBS5_LEMGI</name>
<sequence length="177" mass="19803">MASSMMASTAAVARAGPAQSSMVAPFNGLRSSVAFPATRKANNDLSTLPSNGGRVSCMQVWPPEGLKKFETLSYLPPLSVEDLAKEVDYLLRNDWVPCIEFSKEGFVYRENHASPGYYDGRYWTMWKLPMFGCTDASQVIAEVEEAKKAYPEYFVRIIGFDNKRQVQCISFIAYKPT</sequence>
<keyword id="KW-0113">Calvin cycle</keyword>
<keyword id="KW-0120">Carbon dioxide fixation</keyword>
<keyword id="KW-0150">Chloroplast</keyword>
<keyword id="KW-0601">Photorespiration</keyword>
<keyword id="KW-0602">Photosynthesis</keyword>
<keyword id="KW-0934">Plastid</keyword>
<keyword id="KW-0809">Transit peptide</keyword>
<reference key="1">
    <citation type="journal article" date="1990" name="Plant Mol. Biol.">
        <title>Differential expression of individual genes encoding the small subunit of ribulose-1,5-bisphosphate carboxylase in Lemna gibba.</title>
        <authorList>
            <person name="Silverthorne J."/>
            <person name="Wimpee C.F."/>
            <person name="Yamada T."/>
            <person name="Rolfe S.A."/>
            <person name="Tobin E.M."/>
        </authorList>
    </citation>
    <scope>NUCLEOTIDE SEQUENCE [GENOMIC DNA]</scope>
    <scope>INDUCTION</scope>
</reference>
<organism>
    <name type="scientific">Lemna gibba</name>
    <name type="common">Swollen duckweed</name>
    <dbReference type="NCBI Taxonomy" id="4470"/>
    <lineage>
        <taxon>Eukaryota</taxon>
        <taxon>Viridiplantae</taxon>
        <taxon>Streptophyta</taxon>
        <taxon>Embryophyta</taxon>
        <taxon>Tracheophyta</taxon>
        <taxon>Spermatophyta</taxon>
        <taxon>Magnoliopsida</taxon>
        <taxon>Liliopsida</taxon>
        <taxon>Araceae</taxon>
        <taxon>Lemnoideae</taxon>
        <taxon>Lemna</taxon>
    </lineage>
</organism>
<gene>
    <name evidence="1" type="primary">RBCS5</name>
    <name evidence="3" type="synonym">SSU5A</name>
</gene>
<evidence type="ECO:0000255" key="1">
    <source>
        <dbReference type="HAMAP-Rule" id="MF_00860"/>
    </source>
</evidence>
<evidence type="ECO:0000269" key="2">
    <source>
    </source>
</evidence>
<evidence type="ECO:0000303" key="3">
    <source>
    </source>
</evidence>
<protein>
    <recommendedName>
        <fullName evidence="1">Ribulose bisphosphate carboxylase small subunit, chloroplastic 5</fullName>
        <shortName evidence="1">RuBisCO small subunit 5</shortName>
        <shortName evidence="3">RuBisCO small subunit SSU5A</shortName>
    </recommendedName>
</protein>
<feature type="transit peptide" description="Chloroplast" evidence="1">
    <location>
        <begin position="1"/>
        <end position="56"/>
    </location>
</feature>
<feature type="chain" id="PRO_0000031516" description="Ribulose bisphosphate carboxylase small subunit, chloroplastic 5" evidence="1">
    <location>
        <begin position="57"/>
        <end position="177"/>
    </location>
</feature>
<dbReference type="EMBL" id="X17230">
    <property type="protein sequence ID" value="CAA35099.1"/>
    <property type="molecule type" value="Genomic_DNA"/>
</dbReference>
<dbReference type="PIR" id="S11683">
    <property type="entry name" value="RKDWSA"/>
</dbReference>
<dbReference type="SMR" id="P19311"/>
<dbReference type="GO" id="GO:0009507">
    <property type="term" value="C:chloroplast"/>
    <property type="evidence" value="ECO:0007669"/>
    <property type="project" value="UniProtKB-SubCell"/>
</dbReference>
<dbReference type="GO" id="GO:0016984">
    <property type="term" value="F:ribulose-bisphosphate carboxylase activity"/>
    <property type="evidence" value="ECO:0007669"/>
    <property type="project" value="UniProtKB-UniRule"/>
</dbReference>
<dbReference type="GO" id="GO:0009853">
    <property type="term" value="P:photorespiration"/>
    <property type="evidence" value="ECO:0007669"/>
    <property type="project" value="UniProtKB-KW"/>
</dbReference>
<dbReference type="GO" id="GO:0019253">
    <property type="term" value="P:reductive pentose-phosphate cycle"/>
    <property type="evidence" value="ECO:0007669"/>
    <property type="project" value="UniProtKB-UniRule"/>
</dbReference>
<dbReference type="CDD" id="cd03527">
    <property type="entry name" value="RuBisCO_small"/>
    <property type="match status" value="1"/>
</dbReference>
<dbReference type="FunFam" id="3.30.190.10:FF:000001">
    <property type="entry name" value="Ribulose bisphosphate carboxylase small chain, chloroplastic"/>
    <property type="match status" value="1"/>
</dbReference>
<dbReference type="Gene3D" id="3.30.190.10">
    <property type="entry name" value="Ribulose bisphosphate carboxylase, small subunit"/>
    <property type="match status" value="1"/>
</dbReference>
<dbReference type="HAMAP" id="MF_00859">
    <property type="entry name" value="RuBisCO_S_bact"/>
    <property type="match status" value="1"/>
</dbReference>
<dbReference type="InterPro" id="IPR024681">
    <property type="entry name" value="RuBisCO_ssu"/>
</dbReference>
<dbReference type="InterPro" id="IPR000894">
    <property type="entry name" value="RuBisCO_ssu_dom"/>
</dbReference>
<dbReference type="InterPro" id="IPR024680">
    <property type="entry name" value="RuBisCO_ssu_N"/>
</dbReference>
<dbReference type="InterPro" id="IPR036385">
    <property type="entry name" value="RuBisCO_ssu_sf"/>
</dbReference>
<dbReference type="PANTHER" id="PTHR31262">
    <property type="entry name" value="RIBULOSE BISPHOSPHATE CARBOXYLASE SMALL CHAIN 1, CHLOROPLASTIC"/>
    <property type="match status" value="1"/>
</dbReference>
<dbReference type="PANTHER" id="PTHR31262:SF10">
    <property type="entry name" value="RIBULOSE BISPHOSPHATE CARBOXYLASE SMALL SUBUNIT 1A, CHLOROPLASTIC-RELATED"/>
    <property type="match status" value="1"/>
</dbReference>
<dbReference type="Pfam" id="PF12338">
    <property type="entry name" value="RbcS"/>
    <property type="match status" value="1"/>
</dbReference>
<dbReference type="Pfam" id="PF00101">
    <property type="entry name" value="RuBisCO_small"/>
    <property type="match status" value="1"/>
</dbReference>
<dbReference type="PRINTS" id="PR00152">
    <property type="entry name" value="RUBISCOSMALL"/>
</dbReference>
<dbReference type="SMART" id="SM00961">
    <property type="entry name" value="RuBisCO_small"/>
    <property type="match status" value="1"/>
</dbReference>
<dbReference type="SUPFAM" id="SSF55239">
    <property type="entry name" value="RuBisCO, small subunit"/>
    <property type="match status" value="1"/>
</dbReference>